<feature type="chain" id="PRO_0000278448" description="Spermatogenesis-associated protein 13">
    <location>
        <begin position="1"/>
        <end position="652"/>
    </location>
</feature>
<feature type="domain" description="SH3" evidence="4">
    <location>
        <begin position="147"/>
        <end position="206"/>
    </location>
</feature>
<feature type="domain" description="DH" evidence="2">
    <location>
        <begin position="240"/>
        <end position="424"/>
    </location>
</feature>
<feature type="domain" description="PH" evidence="3">
    <location>
        <begin position="455"/>
        <end position="561"/>
    </location>
</feature>
<feature type="region of interest" description="Disordered" evidence="5">
    <location>
        <begin position="1"/>
        <end position="24"/>
    </location>
</feature>
<feature type="region of interest" description="Disordered" evidence="5">
    <location>
        <begin position="81"/>
        <end position="108"/>
    </location>
</feature>
<feature type="region of interest" description="ABR (APC-binding region) domain">
    <location>
        <begin position="98"/>
        <end position="150"/>
    </location>
</feature>
<feature type="region of interest" description="Disordered" evidence="5">
    <location>
        <begin position="209"/>
        <end position="235"/>
    </location>
</feature>
<feature type="region of interest" description="C-terminal tail">
    <location>
        <begin position="561"/>
        <end position="652"/>
    </location>
</feature>
<feature type="modified residue" description="Phosphoserine" evidence="1">
    <location>
        <position position="78"/>
    </location>
</feature>
<feature type="modified residue" description="Phosphoserine" evidence="1">
    <location>
        <position position="114"/>
    </location>
</feature>
<feature type="splice variant" id="VSP_041030" description="In isoform 2." evidence="12">
    <original>MTSASPEDQNAPVGCPKGARRRRPISVIGGVSLYGTNQTEELDNLLTQPASRPPMPAHQVPPYKAVSARFRPFTFSQSTPIGLDRVGRRRQMRASN</original>
    <variation>MVARGEIARFWSLESLHL</variation>
    <location>
        <begin position="1"/>
        <end position="96"/>
    </location>
</feature>
<feature type="splice variant" id="VSP_041031" description="In isoform 3." evidence="12">
    <original>MTSASPEDQNAPVGCPKGARRRRPISVIGGVSLYGTNQTEELDNLLTQPASRPPMPAHQVPPYKAVSARFRPFTFSQSTPIGLDRVGRRRQMRASN</original>
    <variation>MGFIIHIQQVKKQRKKLDQGLILKKEKYRKEKKCASLSFE</variation>
    <location>
        <begin position="1"/>
        <end position="96"/>
    </location>
</feature>
<feature type="splice variant" id="VSP_041032" description="In isoform 4 and isoform 5." evidence="12">
    <location>
        <begin position="1"/>
        <end position="54"/>
    </location>
</feature>
<feature type="splice variant" id="VSP_054112" description="In isoform 6." evidence="14">
    <original>M</original>
    <variation>MTQAAVRPWAPCLENMTTAPNGLGPGPAAPCAGSDLKDAKMVTSLACGNGVCGCSPGGDTDTQEAKLSPAKLVRLFSTSRKRTGAHPERPHSMVLVGNSSTWNTLASFRKMGSFKKLKSSVLKGIQSREGSNACSKGEASEHGLGKSIPNGAVPGAQASRGSPLAPGPACGALRPAEWGTLDGSDLEDTDDAFQRSTHRSRSLRRAYGLGRICLLDAPQNHATPTIATGQVPAVCEILVRDPENNSMGYRRSKSTDNLAFLKKSSFKRKSTSNLADLRTAHDARVPQRTLSSSSTDSQKLGSGRTKRWRSPIRAKDFDRVFKLVSNVTEAAWRRESPRSGAPSPGEASLRLQAHSRLHDDYSRRVSRSTEQDSRRGGAVMHGTTATCTVAPGFGSATSKGPHLDADTAVFPLETKSSWAVESDSSCTCSSLPSPIVQDVLSKDSCDPNAGSQLTFDPEQPPTPLRPTTPKPQSPQSPQSPGAGSASCHSNHSALSANSEESEGRAEEPAQREPGPVSLQDPLEATHGDEGSKDLLVNIGVAAGPEEKEKEEVVPDGPWRRSSSQDEERTEAQRTPKRRWGSGRRPRPRPFSDYGQLASRSLSIPEDSVAADPQKEDRVDEDPQASM</variation>
    <location>
        <position position="1"/>
    </location>
</feature>
<feature type="splice variant" id="VSP_041033" description="In isoform 5." evidence="12">
    <location>
        <begin position="203"/>
        <end position="264"/>
    </location>
</feature>
<feature type="splice variant" id="VSP_041034" description="In isoform 4." evidence="12">
    <original>GYNRCPVAPPHQGLHPIHQRHITMPTSVPQQQVFGLAEPKRKSSLFWHTFNRLTPFRK</original>
    <variation>VRLQQVPRGPTAPGPAPHPPAPHHYAHKRPPAAGLWPGGTQEEVLALLAHLQQAHPLPEMKTGGCASMELGVKRRN</variation>
    <location>
        <begin position="595"/>
        <end position="652"/>
    </location>
</feature>
<feature type="sequence variant" id="VAR_030776" description="In dbSNP:rs7330736.">
    <original>R</original>
    <variation>W</variation>
    <location>
        <position position="20"/>
    </location>
</feature>
<feature type="sequence variant" id="VAR_080767" description="Found in two consanguineous families with intellectual disability; uncertain significance; dbSNP:rs201402934." evidence="11">
    <original>R</original>
    <variation>W</variation>
    <location>
        <position position="89"/>
    </location>
</feature>
<feature type="sequence conflict" description="In Ref. 2; BAG61802." evidence="14" ref="2">
    <original>E</original>
    <variation>G</variation>
    <location>
        <position position="304"/>
    </location>
</feature>
<feature type="sequence conflict" description="In Ref. 2; BAG62740." evidence="14" ref="2">
    <original>C</original>
    <variation>R</variation>
    <location>
        <position position="520"/>
    </location>
</feature>
<feature type="sequence conflict" description="In Ref. 2; BAG62740." evidence="14" ref="2">
    <original>E</original>
    <variation>G</variation>
    <location>
        <position position="537"/>
    </location>
</feature>
<reference key="1">
    <citation type="journal article" date="2007" name="Mol. Cell. Biol.">
        <title>Asef2 functions as a Cdc42 exchange factor and is stimulated by the release of an autoinhibitory module from a concealed C-terminal activation element.</title>
        <authorList>
            <person name="Hamann M.J."/>
            <person name="Lubking C.M."/>
            <person name="Luchini D.N."/>
            <person name="Billadeau D.D."/>
        </authorList>
    </citation>
    <scope>NUCLEOTIDE SEQUENCE [MRNA] (ISOFORM 1)</scope>
    <scope>FUNCTION</scope>
    <scope>INTERACTION WITH APC AND RAC1</scope>
    <scope>TISSUE SPECIFICITY</scope>
    <scope>ACTIVITY REGULATION</scope>
</reference>
<reference key="2">
    <citation type="journal article" date="2004" name="Nat. Genet.">
        <title>Complete sequencing and characterization of 21,243 full-length human cDNAs.</title>
        <authorList>
            <person name="Ota T."/>
            <person name="Suzuki Y."/>
            <person name="Nishikawa T."/>
            <person name="Otsuki T."/>
            <person name="Sugiyama T."/>
            <person name="Irie R."/>
            <person name="Wakamatsu A."/>
            <person name="Hayashi K."/>
            <person name="Sato H."/>
            <person name="Nagai K."/>
            <person name="Kimura K."/>
            <person name="Makita H."/>
            <person name="Sekine M."/>
            <person name="Obayashi M."/>
            <person name="Nishi T."/>
            <person name="Shibahara T."/>
            <person name="Tanaka T."/>
            <person name="Ishii S."/>
            <person name="Yamamoto J."/>
            <person name="Saito K."/>
            <person name="Kawai Y."/>
            <person name="Isono Y."/>
            <person name="Nakamura Y."/>
            <person name="Nagahari K."/>
            <person name="Murakami K."/>
            <person name="Yasuda T."/>
            <person name="Iwayanagi T."/>
            <person name="Wagatsuma M."/>
            <person name="Shiratori A."/>
            <person name="Sudo H."/>
            <person name="Hosoiri T."/>
            <person name="Kaku Y."/>
            <person name="Kodaira H."/>
            <person name="Kondo H."/>
            <person name="Sugawara M."/>
            <person name="Takahashi M."/>
            <person name="Kanda K."/>
            <person name="Yokoi T."/>
            <person name="Furuya T."/>
            <person name="Kikkawa E."/>
            <person name="Omura Y."/>
            <person name="Abe K."/>
            <person name="Kamihara K."/>
            <person name="Katsuta N."/>
            <person name="Sato K."/>
            <person name="Tanikawa M."/>
            <person name="Yamazaki M."/>
            <person name="Ninomiya K."/>
            <person name="Ishibashi T."/>
            <person name="Yamashita H."/>
            <person name="Murakawa K."/>
            <person name="Fujimori K."/>
            <person name="Tanai H."/>
            <person name="Kimata M."/>
            <person name="Watanabe M."/>
            <person name="Hiraoka S."/>
            <person name="Chiba Y."/>
            <person name="Ishida S."/>
            <person name="Ono Y."/>
            <person name="Takiguchi S."/>
            <person name="Watanabe S."/>
            <person name="Yosida M."/>
            <person name="Hotuta T."/>
            <person name="Kusano J."/>
            <person name="Kanehori K."/>
            <person name="Takahashi-Fujii A."/>
            <person name="Hara H."/>
            <person name="Tanase T.-O."/>
            <person name="Nomura Y."/>
            <person name="Togiya S."/>
            <person name="Komai F."/>
            <person name="Hara R."/>
            <person name="Takeuchi K."/>
            <person name="Arita M."/>
            <person name="Imose N."/>
            <person name="Musashino K."/>
            <person name="Yuuki H."/>
            <person name="Oshima A."/>
            <person name="Sasaki N."/>
            <person name="Aotsuka S."/>
            <person name="Yoshikawa Y."/>
            <person name="Matsunawa H."/>
            <person name="Ichihara T."/>
            <person name="Shiohata N."/>
            <person name="Sano S."/>
            <person name="Moriya S."/>
            <person name="Momiyama H."/>
            <person name="Satoh N."/>
            <person name="Takami S."/>
            <person name="Terashima Y."/>
            <person name="Suzuki O."/>
            <person name="Nakagawa S."/>
            <person name="Senoh A."/>
            <person name="Mizoguchi H."/>
            <person name="Goto Y."/>
            <person name="Shimizu F."/>
            <person name="Wakebe H."/>
            <person name="Hishigaki H."/>
            <person name="Watanabe T."/>
            <person name="Sugiyama A."/>
            <person name="Takemoto M."/>
            <person name="Kawakami B."/>
            <person name="Yamazaki M."/>
            <person name="Watanabe K."/>
            <person name="Kumagai A."/>
            <person name="Itakura S."/>
            <person name="Fukuzumi Y."/>
            <person name="Fujimori Y."/>
            <person name="Komiyama M."/>
            <person name="Tashiro H."/>
            <person name="Tanigami A."/>
            <person name="Fujiwara T."/>
            <person name="Ono T."/>
            <person name="Yamada K."/>
            <person name="Fujii Y."/>
            <person name="Ozaki K."/>
            <person name="Hirao M."/>
            <person name="Ohmori Y."/>
            <person name="Kawabata A."/>
            <person name="Hikiji T."/>
            <person name="Kobatake N."/>
            <person name="Inagaki H."/>
            <person name="Ikema Y."/>
            <person name="Okamoto S."/>
            <person name="Okitani R."/>
            <person name="Kawakami T."/>
            <person name="Noguchi S."/>
            <person name="Itoh T."/>
            <person name="Shigeta K."/>
            <person name="Senba T."/>
            <person name="Matsumura K."/>
            <person name="Nakajima Y."/>
            <person name="Mizuno T."/>
            <person name="Morinaga M."/>
            <person name="Sasaki M."/>
            <person name="Togashi T."/>
            <person name="Oyama M."/>
            <person name="Hata H."/>
            <person name="Watanabe M."/>
            <person name="Komatsu T."/>
            <person name="Mizushima-Sugano J."/>
            <person name="Satoh T."/>
            <person name="Shirai Y."/>
            <person name="Takahashi Y."/>
            <person name="Nakagawa K."/>
            <person name="Okumura K."/>
            <person name="Nagase T."/>
            <person name="Nomura N."/>
            <person name="Kikuchi H."/>
            <person name="Masuho Y."/>
            <person name="Yamashita R."/>
            <person name="Nakai K."/>
            <person name="Yada T."/>
            <person name="Nakamura Y."/>
            <person name="Ohara O."/>
            <person name="Isogai T."/>
            <person name="Sugano S."/>
        </authorList>
    </citation>
    <scope>NUCLEOTIDE SEQUENCE [LARGE SCALE MRNA] (ISOFORMS 1; 2; 3; 4 AND 5)</scope>
    <source>
        <tissue>Kidney</tissue>
        <tissue>Lung</tissue>
        <tissue>Spleen</tissue>
    </source>
</reference>
<reference key="3">
    <citation type="journal article" date="2004" name="Nature">
        <title>The DNA sequence and analysis of human chromosome 13.</title>
        <authorList>
            <person name="Dunham A."/>
            <person name="Matthews L.H."/>
            <person name="Burton J."/>
            <person name="Ashurst J.L."/>
            <person name="Howe K.L."/>
            <person name="Ashcroft K.J."/>
            <person name="Beare D.M."/>
            <person name="Burford D.C."/>
            <person name="Hunt S.E."/>
            <person name="Griffiths-Jones S."/>
            <person name="Jones M.C."/>
            <person name="Keenan S.J."/>
            <person name="Oliver K."/>
            <person name="Scott C.E."/>
            <person name="Ainscough R."/>
            <person name="Almeida J.P."/>
            <person name="Ambrose K.D."/>
            <person name="Andrews D.T."/>
            <person name="Ashwell R.I.S."/>
            <person name="Babbage A.K."/>
            <person name="Bagguley C.L."/>
            <person name="Bailey J."/>
            <person name="Bannerjee R."/>
            <person name="Barlow K.F."/>
            <person name="Bates K."/>
            <person name="Beasley H."/>
            <person name="Bird C.P."/>
            <person name="Bray-Allen S."/>
            <person name="Brown A.J."/>
            <person name="Brown J.Y."/>
            <person name="Burrill W."/>
            <person name="Carder C."/>
            <person name="Carter N.P."/>
            <person name="Chapman J.C."/>
            <person name="Clamp M.E."/>
            <person name="Clark S.Y."/>
            <person name="Clarke G."/>
            <person name="Clee C.M."/>
            <person name="Clegg S.C."/>
            <person name="Cobley V."/>
            <person name="Collins J.E."/>
            <person name="Corby N."/>
            <person name="Coville G.J."/>
            <person name="Deloukas P."/>
            <person name="Dhami P."/>
            <person name="Dunham I."/>
            <person name="Dunn M."/>
            <person name="Earthrowl M.E."/>
            <person name="Ellington A.G."/>
            <person name="Faulkner L."/>
            <person name="Frankish A.G."/>
            <person name="Frankland J."/>
            <person name="French L."/>
            <person name="Garner P."/>
            <person name="Garnett J."/>
            <person name="Gilbert J.G.R."/>
            <person name="Gilson C.J."/>
            <person name="Ghori J."/>
            <person name="Grafham D.V."/>
            <person name="Gribble S.M."/>
            <person name="Griffiths C."/>
            <person name="Hall R.E."/>
            <person name="Hammond S."/>
            <person name="Harley J.L."/>
            <person name="Hart E.A."/>
            <person name="Heath P.D."/>
            <person name="Howden P.J."/>
            <person name="Huckle E.J."/>
            <person name="Hunt P.J."/>
            <person name="Hunt A.R."/>
            <person name="Johnson C."/>
            <person name="Johnson D."/>
            <person name="Kay M."/>
            <person name="Kimberley A.M."/>
            <person name="King A."/>
            <person name="Laird G.K."/>
            <person name="Langford C.J."/>
            <person name="Lawlor S."/>
            <person name="Leongamornlert D.A."/>
            <person name="Lloyd D.M."/>
            <person name="Lloyd C."/>
            <person name="Loveland J.E."/>
            <person name="Lovell J."/>
            <person name="Martin S."/>
            <person name="Mashreghi-Mohammadi M."/>
            <person name="McLaren S.J."/>
            <person name="McMurray A."/>
            <person name="Milne S."/>
            <person name="Moore M.J.F."/>
            <person name="Nickerson T."/>
            <person name="Palmer S.A."/>
            <person name="Pearce A.V."/>
            <person name="Peck A.I."/>
            <person name="Pelan S."/>
            <person name="Phillimore B."/>
            <person name="Porter K.M."/>
            <person name="Rice C.M."/>
            <person name="Searle S."/>
            <person name="Sehra H.K."/>
            <person name="Shownkeen R."/>
            <person name="Skuce C.D."/>
            <person name="Smith M."/>
            <person name="Steward C.A."/>
            <person name="Sycamore N."/>
            <person name="Tester J."/>
            <person name="Thomas D.W."/>
            <person name="Tracey A."/>
            <person name="Tromans A."/>
            <person name="Tubby B."/>
            <person name="Wall M."/>
            <person name="Wallis J.M."/>
            <person name="West A.P."/>
            <person name="Whitehead S.L."/>
            <person name="Willey D.L."/>
            <person name="Wilming L."/>
            <person name="Wray P.W."/>
            <person name="Wright M.W."/>
            <person name="Young L."/>
            <person name="Coulson A."/>
            <person name="Durbin R.M."/>
            <person name="Hubbard T."/>
            <person name="Sulston J.E."/>
            <person name="Beck S."/>
            <person name="Bentley D.R."/>
            <person name="Rogers J."/>
            <person name="Ross M.T."/>
        </authorList>
    </citation>
    <scope>NUCLEOTIDE SEQUENCE [LARGE SCALE GENOMIC DNA]</scope>
</reference>
<reference key="4">
    <citation type="submission" date="2005-07" db="EMBL/GenBank/DDBJ databases">
        <authorList>
            <person name="Mural R.J."/>
            <person name="Istrail S."/>
            <person name="Sutton G.G."/>
            <person name="Florea L."/>
            <person name="Halpern A.L."/>
            <person name="Mobarry C.M."/>
            <person name="Lippert R."/>
            <person name="Walenz B."/>
            <person name="Shatkay H."/>
            <person name="Dew I."/>
            <person name="Miller J.R."/>
            <person name="Flanigan M.J."/>
            <person name="Edwards N.J."/>
            <person name="Bolanos R."/>
            <person name="Fasulo D."/>
            <person name="Halldorsson B.V."/>
            <person name="Hannenhalli S."/>
            <person name="Turner R."/>
            <person name="Yooseph S."/>
            <person name="Lu F."/>
            <person name="Nusskern D.R."/>
            <person name="Shue B.C."/>
            <person name="Zheng X.H."/>
            <person name="Zhong F."/>
            <person name="Delcher A.L."/>
            <person name="Huson D.H."/>
            <person name="Kravitz S.A."/>
            <person name="Mouchard L."/>
            <person name="Reinert K."/>
            <person name="Remington K.A."/>
            <person name="Clark A.G."/>
            <person name="Waterman M.S."/>
            <person name="Eichler E.E."/>
            <person name="Adams M.D."/>
            <person name="Hunkapiller M.W."/>
            <person name="Myers E.W."/>
            <person name="Venter J.C."/>
        </authorList>
    </citation>
    <scope>NUCLEOTIDE SEQUENCE [LARGE SCALE GENOMIC DNA]</scope>
</reference>
<reference key="5">
    <citation type="journal article" date="2004" name="Genome Res.">
        <title>The status, quality, and expansion of the NIH full-length cDNA project: the Mammalian Gene Collection (MGC).</title>
        <authorList>
            <consortium name="The MGC Project Team"/>
        </authorList>
    </citation>
    <scope>NUCLEOTIDE SEQUENCE [LARGE SCALE MRNA] (ISOFORM 1)</scope>
</reference>
<reference key="6">
    <citation type="submission" date="2004-04" db="EMBL/GenBank/DDBJ databases">
        <title>The nucleotide sequence of a long cDNA clone isolated from human spleen.</title>
        <authorList>
            <person name="Jikuya H."/>
            <person name="Takano J."/>
            <person name="Nomura N."/>
            <person name="Kikuno R."/>
            <person name="Nagase T."/>
            <person name="Ohara O."/>
        </authorList>
    </citation>
    <scope>NUCLEOTIDE SEQUENCE [LARGE SCALE MRNA] OF 126-652</scope>
    <source>
        <tissue>Spleen</tissue>
    </source>
</reference>
<reference key="7">
    <citation type="journal article" date="2007" name="Oncogene">
        <title>Identification and characterization of Asef2, a guanine-nucleotide exchange factor specific for Rac1 and Cdc42.</title>
        <authorList>
            <person name="Kawasaki Y."/>
            <person name="Sagara M."/>
            <person name="Shibata Y."/>
            <person name="Shirouzu M."/>
            <person name="Yokoyama S."/>
            <person name="Akiyama T."/>
        </authorList>
    </citation>
    <scope>FUNCTION</scope>
    <scope>INTERACTION WITH APC</scope>
    <scope>SUBCELLULAR LOCATION</scope>
    <scope>TISSUE SPECIFICITY</scope>
    <scope>ALTERNATIVE SPLICING</scope>
</reference>
<reference key="8">
    <citation type="journal article" date="2009" name="EMBO Rep.">
        <title>The adenomatous polyposis coli-associated exchange factors Asef and Asef2 are required for adenoma formation in Apc(Min/+)mice.</title>
        <authorList>
            <person name="Kawasaki Y."/>
            <person name="Tsuji S."/>
            <person name="Muroya K."/>
            <person name="Furukawa S."/>
            <person name="Shibata Y."/>
            <person name="Okuno M."/>
            <person name="Ohwada S."/>
            <person name="Akiyama T."/>
        </authorList>
    </citation>
    <scope>FUNCTION</scope>
    <scope>TISSUE SPECIFICITY</scope>
</reference>
<reference key="9">
    <citation type="journal article" date="2009" name="J. Cell Sci.">
        <title>The Rho-family GEF Asef2 activates Rac to modulate adhesion and actin dynamics and thereby regulate cell migration.</title>
        <authorList>
            <person name="Bristow J.M."/>
            <person name="Sellers M.H."/>
            <person name="Majumdar D."/>
            <person name="Anderson B."/>
            <person name="Hu L."/>
            <person name="Webb D.J."/>
        </authorList>
    </citation>
    <scope>FUNCTION</scope>
</reference>
<reference key="10">
    <citation type="journal article" date="2009" name="Oncogene">
        <title>Asef2 and Neurabin2 cooperatively regulate actin cytoskeletal organization and are involved in HGF-induced cell migration.</title>
        <authorList>
            <person name="Sagara M."/>
            <person name="Kawasaki Y."/>
            <person name="Iemura S.I."/>
            <person name="Natsume T."/>
            <person name="Takai Y."/>
            <person name="Akiyama T."/>
        </authorList>
    </citation>
    <scope>FUNCTION</scope>
    <scope>SUBCELLULAR LOCATION</scope>
    <scope>INTERACTION WITH PPP1R9B</scope>
</reference>
<reference key="11">
    <citation type="journal article" date="2018" name="Mol. Psychiatry">
        <title>Mapping autosomal recessive intellectual disability: combined microarray and exome sequencing identifies 26 novel candidate genes in 192 consanguineous families.</title>
        <authorList>
            <person name="Harripaul R."/>
            <person name="Vasli N."/>
            <person name="Mikhailov A."/>
            <person name="Rafiq M.A."/>
            <person name="Mittal K."/>
            <person name="Windpassinger C."/>
            <person name="Sheikh T.I."/>
            <person name="Noor A."/>
            <person name="Mahmood H."/>
            <person name="Downey S."/>
            <person name="Johnson M."/>
            <person name="Vleuten K."/>
            <person name="Bell L."/>
            <person name="Ilyas M."/>
            <person name="Khan F.S."/>
            <person name="Khan V."/>
            <person name="Moradi M."/>
            <person name="Ayaz M."/>
            <person name="Naeem F."/>
            <person name="Heidari A."/>
            <person name="Ahmed I."/>
            <person name="Ghadami S."/>
            <person name="Agha Z."/>
            <person name="Zeinali S."/>
            <person name="Qamar R."/>
            <person name="Mozhdehipanah H."/>
            <person name="John P."/>
            <person name="Mir A."/>
            <person name="Ansar M."/>
            <person name="French L."/>
            <person name="Ayub M."/>
            <person name="Vincent J.B."/>
        </authorList>
    </citation>
    <scope>VARIANT TRP-89</scope>
</reference>
<organism>
    <name type="scientific">Homo sapiens</name>
    <name type="common">Human</name>
    <dbReference type="NCBI Taxonomy" id="9606"/>
    <lineage>
        <taxon>Eukaryota</taxon>
        <taxon>Metazoa</taxon>
        <taxon>Chordata</taxon>
        <taxon>Craniata</taxon>
        <taxon>Vertebrata</taxon>
        <taxon>Euteleostomi</taxon>
        <taxon>Mammalia</taxon>
        <taxon>Eutheria</taxon>
        <taxon>Euarchontoglires</taxon>
        <taxon>Primates</taxon>
        <taxon>Haplorrhini</taxon>
        <taxon>Catarrhini</taxon>
        <taxon>Hominidae</taxon>
        <taxon>Homo</taxon>
    </lineage>
</organism>
<sequence length="652" mass="74820">MTSASPEDQNAPVGCPKGARRRRPISVIGGVSLYGTNQTEELDNLLTQPASRPPMPAHQVPPYKAVSARFRPFTFSQSTPIGLDRVGRRRQMRASNVSSDGGTEPSALVDDNGSEEDFSYEDLCQASPRYLQPGGEQLAINELISDGNVVCAEALWDHVTMDDQELGFKAGDVIQVLEASNKDWWWGRSEDKEAWFPASFVRLRVNQEELSENSSSTPSEEQDEEASQSRHRHCENKQQMRTNVIREIMDTERVYIKHLRDICEGYIRQCRKHTGMFTVAQLATIFGNIEDIYKFQRKFLKDLEKQYNKEEPHLSEIGSCFLQNQEGFAIYSEYCNNHPGACLELANLMKQGKYRHFFEACRLLQQMIDIAIDGFLLTPVQKICKYPLQLAELLKYTTQEHGDYSNIKAAYEAMKNVACLINERKRKLESIDKIARWQVSIVGWEGLDILDRSSELIHSGELTKITKQGKSQQRTFFLFDHQLVSCKKDLLRRDMLYYKGRLDMDEMELVDLGDGRDKDCNLSVKNAFKLVSRTTDEVYLFCAKKQEDKARWLQACADERRRVQEDKEMGMEISENQKKLAMLNAQKAGHGKSKGYNRCPVAPPHQGLHPIHQRHITMPTSVPQQQVFGLAEPKRKSSLFWHTFNRLTPFRK</sequence>
<proteinExistence type="evidence at protein level"/>
<gene>
    <name evidence="13 15" type="primary">SPATA13</name>
</gene>
<accession>Q96N96</accession>
<accession>A2VEA9</accession>
<accession>A6NF85</accession>
<accession>B4DQB1</accession>
<accession>B4DSZ0</accession>
<accession>B4DVM8</accession>
<accession>J3KPJ7</accession>
<accession>J3KQH2</accession>
<accession>Q5VX68</accession>
<accession>Q6ZML1</accession>
<accession>Q8N873</accession>
<accession>Q8TEK6</accession>
<evidence type="ECO:0000250" key="1">
    <source>
        <dbReference type="UniProtKB" id="Q5DU57"/>
    </source>
</evidence>
<evidence type="ECO:0000255" key="2">
    <source>
        <dbReference type="PROSITE-ProRule" id="PRU00062"/>
    </source>
</evidence>
<evidence type="ECO:0000255" key="3">
    <source>
        <dbReference type="PROSITE-ProRule" id="PRU00145"/>
    </source>
</evidence>
<evidence type="ECO:0000255" key="4">
    <source>
        <dbReference type="PROSITE-ProRule" id="PRU00192"/>
    </source>
</evidence>
<evidence type="ECO:0000256" key="5">
    <source>
        <dbReference type="SAM" id="MobiDB-lite"/>
    </source>
</evidence>
<evidence type="ECO:0000269" key="6">
    <source>
    </source>
</evidence>
<evidence type="ECO:0000269" key="7">
    <source>
    </source>
</evidence>
<evidence type="ECO:0000269" key="8">
    <source>
    </source>
</evidence>
<evidence type="ECO:0000269" key="9">
    <source>
    </source>
</evidence>
<evidence type="ECO:0000269" key="10">
    <source>
    </source>
</evidence>
<evidence type="ECO:0000269" key="11">
    <source>
    </source>
</evidence>
<evidence type="ECO:0000303" key="12">
    <source>
    </source>
</evidence>
<evidence type="ECO:0000303" key="13">
    <source>
    </source>
</evidence>
<evidence type="ECO:0000305" key="14"/>
<evidence type="ECO:0000312" key="15">
    <source>
        <dbReference type="HGNC" id="HGNC:23222"/>
    </source>
</evidence>
<keyword id="KW-0025">Alternative splicing</keyword>
<keyword id="KW-0965">Cell junction</keyword>
<keyword id="KW-1003">Cell membrane</keyword>
<keyword id="KW-0966">Cell projection</keyword>
<keyword id="KW-0963">Cytoplasm</keyword>
<keyword id="KW-0344">Guanine-nucleotide releasing factor</keyword>
<keyword id="KW-0472">Membrane</keyword>
<keyword id="KW-0597">Phosphoprotein</keyword>
<keyword id="KW-1267">Proteomics identification</keyword>
<keyword id="KW-1185">Reference proteome</keyword>
<keyword id="KW-0728">SH3 domain</keyword>
<comment type="function">
    <text evidence="6 7 8 9 10">Acts as a guanine nucleotide exchange factor (GEF) for RHOA, RAC1 and CDC42 GTPases. Regulates cell migration and adhesion assembly and disassembly through a RAC1, PI3K, RHOA and AKT1-dependent mechanism. Increases both RAC1 and CDC42 activity, but decreases the amount of active RHOA. Required for MMP9 up-regulation via the JNK signaling pathway in colorectal tumor cells. Involved in tumor angiogenesis and may play a role in intestinal adenoma formation and tumor progression.</text>
</comment>
<comment type="activity regulation">
    <text evidence="6">Both the ABR and the SH3 domains contribute to maintaining the protein in an inhibited conformation by associating with the C-terminal tail. Binding of these domains to the C-terminal tail inhibits the activity of the protein by blocking a region that is required for its GEF activity.</text>
</comment>
<comment type="subunit">
    <text evidence="6 7 8">Interacts (via ABR and SH3 domain) with APC. The binding of APC enhances its GEF activity by relieving it from an autoinhibitory conformation, in which the ABR and SH3 domains are associated with the C-terminal tail. Interacts (via C-terminal tail) with PPP1R9B (via C-terminus). Interacts with RAC1.</text>
</comment>
<comment type="interaction">
    <interactant intactId="EBI-13618641">
        <id>Q96N96</id>
    </interactant>
    <interactant intactId="EBI-727707">
        <id>P25054</id>
        <label>APC</label>
    </interactant>
    <organismsDiffer>false</organismsDiffer>
    <experiments>5</experiments>
</comment>
<comment type="interaction">
    <interactant intactId="EBI-13618641">
        <id>Q96N96</id>
    </interactant>
    <interactant intactId="EBI-356498">
        <id>P62258</id>
        <label>YWHAE</label>
    </interactant>
    <organismsDiffer>false</organismsDiffer>
    <experiments>4</experiments>
</comment>
<comment type="interaction">
    <interactant intactId="EBI-13638906">
        <id>Q96N96-1</id>
    </interactant>
    <interactant intactId="EBI-727707">
        <id>P25054</id>
        <label>APC</label>
    </interactant>
    <organismsDiffer>false</organismsDiffer>
    <experiments>5</experiments>
</comment>
<comment type="interaction">
    <interactant intactId="EBI-13638906">
        <id>Q96N96-1</id>
    </interactant>
    <interactant intactId="EBI-13638906">
        <id>Q96N96-1</id>
        <label>SPATA13</label>
    </interactant>
    <organismsDiffer>false</organismsDiffer>
    <experiments>4</experiments>
</comment>
<comment type="interaction">
    <interactant intactId="EBI-13639118">
        <id>Q96N96-2</id>
    </interactant>
    <interactant intactId="EBI-727707">
        <id>P25054</id>
        <label>APC</label>
    </interactant>
    <organismsDiffer>false</organismsDiffer>
    <experiments>2</experiments>
</comment>
<comment type="subcellular location">
    <subcellularLocation>
        <location>Cytoplasm</location>
    </subcellularLocation>
    <subcellularLocation>
        <location>Cell projection</location>
        <location>Filopodium</location>
    </subcellularLocation>
    <subcellularLocation>
        <location>Cell projection</location>
        <location>Lamellipodium</location>
    </subcellularLocation>
    <subcellularLocation>
        <location>Cell projection</location>
        <location>Ruffle membrane</location>
    </subcellularLocation>
    <subcellularLocation>
        <location evidence="1">Cell projection</location>
        <location evidence="1">Podosome</location>
    </subcellularLocation>
    <text evidence="1">Accumulates in the lamellipodium and ruffle membrane in response to hepatocyte growth factor (HGF) treatment. Localized to the core of myotube podosomes (By similarity).</text>
</comment>
<comment type="alternative products">
    <event type="alternative splicing"/>
    <isoform>
        <id>Q96N96-1</id>
        <name>1</name>
        <name>ASEF-2b</name>
        <sequence type="displayed"/>
    </isoform>
    <isoform>
        <id>Q96N96-2</id>
        <name>2</name>
        <name>ASEF-2a</name>
        <sequence type="described" ref="VSP_041030"/>
    </isoform>
    <isoform>
        <id>Q96N96-3</id>
        <name>3</name>
        <sequence type="described" ref="VSP_041031"/>
    </isoform>
    <isoform>
        <id>Q96N96-4</id>
        <name>4</name>
        <sequence type="described" ref="VSP_041032 VSP_041034"/>
    </isoform>
    <isoform>
        <id>Q96N96-5</id>
        <name>5</name>
        <sequence type="described" ref="VSP_041032 VSP_041033"/>
    </isoform>
    <isoform>
        <id>Q96N96-6</id>
        <name>6</name>
        <sequence type="described" ref="VSP_054112"/>
    </isoform>
    <text>Additional isoforms seem to exist.</text>
</comment>
<comment type="tissue specificity">
    <text evidence="6 7 9">Expressed at high levels in the placenta, spleen and kidney, at moderate levels in lung, small intestine, liver, brain and heart, and at low levels in skeletal muscle. Expression is aberrantly enhanced in most colorectal tumors.</text>
</comment>
<comment type="domain">
    <text>The C-terminal tail is required for its GEF activity.</text>
</comment>
<comment type="sequence caution" evidence="14">
    <conflict type="erroneous initiation">
        <sequence resource="EMBL-CDS" id="BAC04977"/>
    </conflict>
    <text>Truncated N-terminus.</text>
</comment>
<name>SPT13_HUMAN</name>
<protein>
    <recommendedName>
        <fullName>Spermatogenesis-associated protein 13</fullName>
    </recommendedName>
    <alternativeName>
        <fullName>APC-stimulated guanine nucleotide exchange factor 2</fullName>
        <shortName>Asef2</shortName>
    </alternativeName>
</protein>
<dbReference type="EMBL" id="BK006072">
    <property type="protein sequence ID" value="DAA05848.1"/>
    <property type="molecule type" value="mRNA"/>
</dbReference>
<dbReference type="EMBL" id="AK055770">
    <property type="protein sequence ID" value="BAB71009.1"/>
    <property type="molecule type" value="mRNA"/>
</dbReference>
<dbReference type="EMBL" id="AK097217">
    <property type="protein sequence ID" value="BAC04977.1"/>
    <property type="status" value="ALT_INIT"/>
    <property type="molecule type" value="mRNA"/>
</dbReference>
<dbReference type="EMBL" id="AK123031">
    <property type="protein sequence ID" value="BAG53856.1"/>
    <property type="molecule type" value="mRNA"/>
</dbReference>
<dbReference type="EMBL" id="AK298717">
    <property type="protein sequence ID" value="BAG60873.1"/>
    <property type="molecule type" value="mRNA"/>
</dbReference>
<dbReference type="EMBL" id="AK299981">
    <property type="protein sequence ID" value="BAG61802.1"/>
    <property type="molecule type" value="mRNA"/>
</dbReference>
<dbReference type="EMBL" id="AK301149">
    <property type="protein sequence ID" value="BAG62740.1"/>
    <property type="molecule type" value="mRNA"/>
</dbReference>
<dbReference type="EMBL" id="AL136963">
    <property type="status" value="NOT_ANNOTATED_CDS"/>
    <property type="molecule type" value="Genomic_DNA"/>
</dbReference>
<dbReference type="EMBL" id="AL139324">
    <property type="status" value="NOT_ANNOTATED_CDS"/>
    <property type="molecule type" value="Genomic_DNA"/>
</dbReference>
<dbReference type="EMBL" id="AL359736">
    <property type="status" value="NOT_ANNOTATED_CDS"/>
    <property type="molecule type" value="Genomic_DNA"/>
</dbReference>
<dbReference type="EMBL" id="AL445985">
    <property type="status" value="NOT_ANNOTATED_CDS"/>
    <property type="molecule type" value="Genomic_DNA"/>
</dbReference>
<dbReference type="EMBL" id="CH471075">
    <property type="protein sequence ID" value="EAX08331.1"/>
    <property type="molecule type" value="Genomic_DNA"/>
</dbReference>
<dbReference type="EMBL" id="BC109290">
    <property type="protein sequence ID" value="AAI09291.1"/>
    <property type="molecule type" value="mRNA"/>
</dbReference>
<dbReference type="EMBL" id="BC109291">
    <property type="protein sequence ID" value="AAI09292.1"/>
    <property type="molecule type" value="mRNA"/>
</dbReference>
<dbReference type="EMBL" id="AK074117">
    <property type="protein sequence ID" value="BAB84943.1"/>
    <property type="molecule type" value="mRNA"/>
</dbReference>
<dbReference type="EMBL" id="AK160371">
    <property type="protein sequence ID" value="BAD18714.1"/>
    <property type="molecule type" value="mRNA"/>
</dbReference>
<dbReference type="CCDS" id="CCDS53857.1">
    <molecule id="Q96N96-6"/>
</dbReference>
<dbReference type="CCDS" id="CCDS66517.1">
    <molecule id="Q96N96-2"/>
</dbReference>
<dbReference type="CCDS" id="CCDS66518.1">
    <molecule id="Q96N96-3"/>
</dbReference>
<dbReference type="CCDS" id="CCDS9305.1">
    <molecule id="Q96N96-1"/>
</dbReference>
<dbReference type="RefSeq" id="NP_001159743.1">
    <molecule id="Q96N96-6"/>
    <property type="nucleotide sequence ID" value="NM_001166271.3"/>
</dbReference>
<dbReference type="RefSeq" id="NP_001273721.1">
    <property type="nucleotide sequence ID" value="NM_001286792.1"/>
</dbReference>
<dbReference type="RefSeq" id="NP_001273722.1">
    <property type="nucleotide sequence ID" value="NM_001286793.1"/>
</dbReference>
<dbReference type="RefSeq" id="NP_001273723.1">
    <molecule id="Q96N96-3"/>
    <property type="nucleotide sequence ID" value="NM_001286794.2"/>
</dbReference>
<dbReference type="RefSeq" id="NP_001273724.1">
    <molecule id="Q96N96-2"/>
    <property type="nucleotide sequence ID" value="NM_001286795.2"/>
</dbReference>
<dbReference type="RefSeq" id="NP_694568.1">
    <molecule id="Q96N96-1"/>
    <property type="nucleotide sequence ID" value="NM_153023.4"/>
</dbReference>
<dbReference type="SMR" id="Q96N96"/>
<dbReference type="BioGRID" id="128693">
    <property type="interactions" value="21"/>
</dbReference>
<dbReference type="FunCoup" id="Q96N96">
    <property type="interactions" value="267"/>
</dbReference>
<dbReference type="IntAct" id="Q96N96">
    <property type="interactions" value="14"/>
</dbReference>
<dbReference type="STRING" id="9606.ENSP00000398560"/>
<dbReference type="GlyGen" id="Q96N96">
    <property type="glycosylation" value="1 site"/>
</dbReference>
<dbReference type="iPTMnet" id="Q96N96"/>
<dbReference type="PhosphoSitePlus" id="Q96N96"/>
<dbReference type="BioMuta" id="SPATA13"/>
<dbReference type="DMDM" id="74752049"/>
<dbReference type="jPOST" id="Q96N96"/>
<dbReference type="MassIVE" id="Q96N96"/>
<dbReference type="PaxDb" id="9606-ENSP00000398560"/>
<dbReference type="PeptideAtlas" id="Q96N96"/>
<dbReference type="ProteomicsDB" id="77489">
    <molecule id="Q96N96-1"/>
</dbReference>
<dbReference type="ProteomicsDB" id="77490">
    <molecule id="Q96N96-2"/>
</dbReference>
<dbReference type="ProteomicsDB" id="77491">
    <molecule id="Q96N96-3"/>
</dbReference>
<dbReference type="ProteomicsDB" id="77492">
    <molecule id="Q96N96-4"/>
</dbReference>
<dbReference type="ProteomicsDB" id="77493">
    <molecule id="Q96N96-5"/>
</dbReference>
<dbReference type="Pumba" id="Q96N96"/>
<dbReference type="Antibodypedia" id="49852">
    <property type="antibodies" value="98 antibodies from 22 providers"/>
</dbReference>
<dbReference type="DNASU" id="221178"/>
<dbReference type="Ensembl" id="ENST00000343003.10">
    <molecule id="Q96N96-3"/>
    <property type="protein sequence ID" value="ENSP00000343631.6"/>
    <property type="gene ID" value="ENSG00000182957.16"/>
</dbReference>
<dbReference type="Ensembl" id="ENST00000382095.8">
    <molecule id="Q96N96-1"/>
    <property type="protein sequence ID" value="ENSP00000371527.4"/>
    <property type="gene ID" value="ENSG00000182957.16"/>
</dbReference>
<dbReference type="Ensembl" id="ENST00000382108.8">
    <molecule id="Q96N96-6"/>
    <property type="protein sequence ID" value="ENSP00000371542.3"/>
    <property type="gene ID" value="ENSG00000182957.16"/>
</dbReference>
<dbReference type="Ensembl" id="ENST00000399949.6">
    <molecule id="Q96N96-2"/>
    <property type="protein sequence ID" value="ENSP00000382830.2"/>
    <property type="gene ID" value="ENSG00000182957.16"/>
</dbReference>
<dbReference type="Ensembl" id="ENST00000424834.6">
    <molecule id="Q96N96-6"/>
    <property type="protein sequence ID" value="ENSP00000398560.2"/>
    <property type="gene ID" value="ENSG00000182957.16"/>
</dbReference>
<dbReference type="GeneID" id="221178"/>
<dbReference type="KEGG" id="hsa:221178"/>
<dbReference type="MANE-Select" id="ENST00000382108.8">
    <molecule id="Q96N96-6"/>
    <property type="protein sequence ID" value="ENSP00000371542.3"/>
    <property type="RefSeq nucleotide sequence ID" value="NM_001166271.3"/>
    <property type="RefSeq protein sequence ID" value="NP_001159743.1"/>
</dbReference>
<dbReference type="UCSC" id="uc001upg.4">
    <molecule id="Q96N96-1"/>
    <property type="organism name" value="human"/>
</dbReference>
<dbReference type="AGR" id="HGNC:23222"/>
<dbReference type="CTD" id="221178"/>
<dbReference type="DisGeNET" id="221178"/>
<dbReference type="GeneCards" id="SPATA13"/>
<dbReference type="HGNC" id="HGNC:23222">
    <property type="gene designation" value="SPATA13"/>
</dbReference>
<dbReference type="HPA" id="ENSG00000182957">
    <property type="expression patterns" value="Tissue enhanced (lymphoid)"/>
</dbReference>
<dbReference type="MIM" id="613324">
    <property type="type" value="gene"/>
</dbReference>
<dbReference type="neXtProt" id="NX_Q96N96"/>
<dbReference type="OpenTargets" id="ENSG00000182957"/>
<dbReference type="PharmGKB" id="PA134912609"/>
<dbReference type="VEuPathDB" id="HostDB:ENSG00000182957"/>
<dbReference type="eggNOG" id="KOG3519">
    <property type="taxonomic scope" value="Eukaryota"/>
</dbReference>
<dbReference type="GeneTree" id="ENSGT00940000154103"/>
<dbReference type="HOGENOM" id="CLU_008436_0_0_1"/>
<dbReference type="InParanoid" id="Q96N96"/>
<dbReference type="OMA" id="PETECQK"/>
<dbReference type="OrthoDB" id="660555at2759"/>
<dbReference type="PAN-GO" id="Q96N96">
    <property type="GO annotations" value="4 GO annotations based on evolutionary models"/>
</dbReference>
<dbReference type="PhylomeDB" id="Q96N96"/>
<dbReference type="TreeFam" id="TF316832"/>
<dbReference type="PathwayCommons" id="Q96N96"/>
<dbReference type="Reactome" id="R-HSA-9013148">
    <property type="pathway name" value="CDC42 GTPase cycle"/>
</dbReference>
<dbReference type="Reactome" id="R-HSA-9013149">
    <property type="pathway name" value="RAC1 GTPase cycle"/>
</dbReference>
<dbReference type="SignaLink" id="Q96N96"/>
<dbReference type="SIGNOR" id="Q96N96"/>
<dbReference type="BioGRID-ORCS" id="221178">
    <property type="hits" value="17 hits in 1151 CRISPR screens"/>
</dbReference>
<dbReference type="ChiTaRS" id="SPATA13">
    <property type="organism name" value="human"/>
</dbReference>
<dbReference type="GenomeRNAi" id="221178"/>
<dbReference type="Pharos" id="Q96N96">
    <property type="development level" value="Tbio"/>
</dbReference>
<dbReference type="PRO" id="PR:Q96N96"/>
<dbReference type="Proteomes" id="UP000005640">
    <property type="component" value="Chromosome 13"/>
</dbReference>
<dbReference type="RNAct" id="Q96N96">
    <property type="molecule type" value="protein"/>
</dbReference>
<dbReference type="Bgee" id="ENSG00000182957">
    <property type="expression patterns" value="Expressed in epithelial cell of pancreas and 191 other cell types or tissues"/>
</dbReference>
<dbReference type="ExpressionAtlas" id="Q96N96">
    <property type="expression patterns" value="baseline and differential"/>
</dbReference>
<dbReference type="GO" id="GO:0070161">
    <property type="term" value="C:anchoring junction"/>
    <property type="evidence" value="ECO:0007669"/>
    <property type="project" value="UniProtKB-KW"/>
</dbReference>
<dbReference type="GO" id="GO:0005737">
    <property type="term" value="C:cytoplasm"/>
    <property type="evidence" value="ECO:0000314"/>
    <property type="project" value="UniProtKB"/>
</dbReference>
<dbReference type="GO" id="GO:0005829">
    <property type="term" value="C:cytosol"/>
    <property type="evidence" value="ECO:0000314"/>
    <property type="project" value="HPA"/>
</dbReference>
<dbReference type="GO" id="GO:0030175">
    <property type="term" value="C:filopodium"/>
    <property type="evidence" value="ECO:0000314"/>
    <property type="project" value="UniProtKB"/>
</dbReference>
<dbReference type="GO" id="GO:0030027">
    <property type="term" value="C:lamellipodium"/>
    <property type="evidence" value="ECO:0000314"/>
    <property type="project" value="UniProtKB"/>
</dbReference>
<dbReference type="GO" id="GO:0005654">
    <property type="term" value="C:nucleoplasm"/>
    <property type="evidence" value="ECO:0000314"/>
    <property type="project" value="HPA"/>
</dbReference>
<dbReference type="GO" id="GO:0002102">
    <property type="term" value="C:podosome"/>
    <property type="evidence" value="ECO:0000250"/>
    <property type="project" value="UniProtKB"/>
</dbReference>
<dbReference type="GO" id="GO:0032587">
    <property type="term" value="C:ruffle membrane"/>
    <property type="evidence" value="ECO:0000314"/>
    <property type="project" value="UniProtKB"/>
</dbReference>
<dbReference type="GO" id="GO:0005085">
    <property type="term" value="F:guanyl-nucleotide exchange factor activity"/>
    <property type="evidence" value="ECO:0000314"/>
    <property type="project" value="UniProtKB"/>
</dbReference>
<dbReference type="GO" id="GO:0042802">
    <property type="term" value="F:identical protein binding"/>
    <property type="evidence" value="ECO:0000353"/>
    <property type="project" value="IntAct"/>
</dbReference>
<dbReference type="GO" id="GO:0016477">
    <property type="term" value="P:cell migration"/>
    <property type="evidence" value="ECO:0000315"/>
    <property type="project" value="UniProtKB"/>
</dbReference>
<dbReference type="GO" id="GO:0046847">
    <property type="term" value="P:filopodium assembly"/>
    <property type="evidence" value="ECO:0000315"/>
    <property type="project" value="UniProtKB"/>
</dbReference>
<dbReference type="GO" id="GO:0030032">
    <property type="term" value="P:lamellipodium assembly"/>
    <property type="evidence" value="ECO:0000315"/>
    <property type="project" value="UniProtKB"/>
</dbReference>
<dbReference type="GO" id="GO:0030334">
    <property type="term" value="P:regulation of cell migration"/>
    <property type="evidence" value="ECO:0000315"/>
    <property type="project" value="UniProtKB"/>
</dbReference>
<dbReference type="GO" id="GO:0051056">
    <property type="term" value="P:regulation of small GTPase mediated signal transduction"/>
    <property type="evidence" value="ECO:0000304"/>
    <property type="project" value="Reactome"/>
</dbReference>
<dbReference type="CDD" id="cd01224">
    <property type="entry name" value="PH_Collybistin_ASEF"/>
    <property type="match status" value="1"/>
</dbReference>
<dbReference type="CDD" id="cd00160">
    <property type="entry name" value="RhoGEF"/>
    <property type="match status" value="1"/>
</dbReference>
<dbReference type="CDD" id="cd11973">
    <property type="entry name" value="SH3_ASEF"/>
    <property type="match status" value="1"/>
</dbReference>
<dbReference type="FunFam" id="1.20.900.10:FF:000002">
    <property type="entry name" value="Rho guanine nucleotide exchange factor 9"/>
    <property type="match status" value="1"/>
</dbReference>
<dbReference type="FunFam" id="2.30.29.30:FF:000015">
    <property type="entry name" value="Rho guanine nucleotide exchange factor 9"/>
    <property type="match status" value="1"/>
</dbReference>
<dbReference type="FunFam" id="2.30.30.40:FF:000077">
    <property type="entry name" value="spermatogenesis-associated protein 13 isoform X2"/>
    <property type="match status" value="1"/>
</dbReference>
<dbReference type="Gene3D" id="1.20.900.10">
    <property type="entry name" value="Dbl homology (DH) domain"/>
    <property type="match status" value="1"/>
</dbReference>
<dbReference type="Gene3D" id="2.30.29.30">
    <property type="entry name" value="Pleckstrin-homology domain (PH domain)/Phosphotyrosine-binding domain (PTB)"/>
    <property type="match status" value="1"/>
</dbReference>
<dbReference type="Gene3D" id="2.30.30.40">
    <property type="entry name" value="SH3 Domains"/>
    <property type="match status" value="1"/>
</dbReference>
<dbReference type="InterPro" id="IPR035899">
    <property type="entry name" value="DBL_dom_sf"/>
</dbReference>
<dbReference type="InterPro" id="IPR000219">
    <property type="entry name" value="DH_dom"/>
</dbReference>
<dbReference type="InterPro" id="IPR011993">
    <property type="entry name" value="PH-like_dom_sf"/>
</dbReference>
<dbReference type="InterPro" id="IPR001849">
    <property type="entry name" value="PH_domain"/>
</dbReference>
<dbReference type="InterPro" id="IPR036028">
    <property type="entry name" value="SH3-like_dom_sf"/>
</dbReference>
<dbReference type="InterPro" id="IPR001452">
    <property type="entry name" value="SH3_domain"/>
</dbReference>
<dbReference type="InterPro" id="IPR055251">
    <property type="entry name" value="SOS1_NGEF_PH"/>
</dbReference>
<dbReference type="PANTHER" id="PTHR47544">
    <property type="entry name" value="RHO GUANINE NUCLEOTIDE EXCHANGE FACTOR 4"/>
    <property type="match status" value="1"/>
</dbReference>
<dbReference type="PANTHER" id="PTHR47544:SF5">
    <property type="entry name" value="SPERMATOGENESIS-ASSOCIATED 13"/>
    <property type="match status" value="1"/>
</dbReference>
<dbReference type="Pfam" id="PF00621">
    <property type="entry name" value="RhoGEF"/>
    <property type="match status" value="1"/>
</dbReference>
<dbReference type="Pfam" id="PF00018">
    <property type="entry name" value="SH3_1"/>
    <property type="match status" value="1"/>
</dbReference>
<dbReference type="Pfam" id="PF22697">
    <property type="entry name" value="SOS1_NGEF_PH"/>
    <property type="match status" value="1"/>
</dbReference>
<dbReference type="SMART" id="SM00233">
    <property type="entry name" value="PH"/>
    <property type="match status" value="1"/>
</dbReference>
<dbReference type="SMART" id="SM00325">
    <property type="entry name" value="RhoGEF"/>
    <property type="match status" value="1"/>
</dbReference>
<dbReference type="SMART" id="SM00326">
    <property type="entry name" value="SH3"/>
    <property type="match status" value="1"/>
</dbReference>
<dbReference type="SUPFAM" id="SSF48065">
    <property type="entry name" value="DBL homology domain (DH-domain)"/>
    <property type="match status" value="1"/>
</dbReference>
<dbReference type="SUPFAM" id="SSF50729">
    <property type="entry name" value="PH domain-like"/>
    <property type="match status" value="1"/>
</dbReference>
<dbReference type="SUPFAM" id="SSF50044">
    <property type="entry name" value="SH3-domain"/>
    <property type="match status" value="1"/>
</dbReference>
<dbReference type="PROSITE" id="PS50010">
    <property type="entry name" value="DH_2"/>
    <property type="match status" value="1"/>
</dbReference>
<dbReference type="PROSITE" id="PS50003">
    <property type="entry name" value="PH_DOMAIN"/>
    <property type="match status" value="1"/>
</dbReference>
<dbReference type="PROSITE" id="PS50002">
    <property type="entry name" value="SH3"/>
    <property type="match status" value="1"/>
</dbReference>